<proteinExistence type="evidence at protein level"/>
<keyword id="KW-0157">Chromophore</keyword>
<keyword id="KW-1015">Disulfide bond</keyword>
<keyword id="KW-0297">G-protein coupled receptor</keyword>
<keyword id="KW-0325">Glycoprotein</keyword>
<keyword id="KW-0472">Membrane</keyword>
<keyword id="KW-0597">Phosphoprotein</keyword>
<keyword id="KW-0600">Photoreceptor protein</keyword>
<keyword id="KW-0675">Receptor</keyword>
<keyword id="KW-0681">Retinal protein</keyword>
<keyword id="KW-0716">Sensory transduction</keyword>
<keyword id="KW-0807">Transducer</keyword>
<keyword id="KW-0812">Transmembrane</keyword>
<keyword id="KW-1133">Transmembrane helix</keyword>
<keyword id="KW-0844">Vision</keyword>
<sequence>MAAHADEPVFAARRYNEETTRESAFVYTNANNTRDPFEGPNYHIAPRWVYNLASLWMIIVVIASIFTNSLVIVATAKFKKLRHPLNWILVNLAIADLGETVLASTISVFNQVFGYFVLGHPMCIFEGWTVSVCGITALWSLTIISWERWVVVCKPFGNVKFDGKWAAGGIIFAWTWAIIWCTPPIFGWSRYWPHGLKTSCGPDVFSGSEDPGVASYMVTLLLTCCILPLSVIIICYIFVWNAIHQVAQQQKDSESTQKAEKEVSRMVVVMILAFILCWGPYASFATFSALNPGYAWHPLAAALPAYFAKSATIYNPIIYVFMNRQFRSCIMQLFGKKVEDASEVSGSTTEVSTAS</sequence>
<feature type="chain" id="PRO_0000197772" description="Green-sensitive opsin-1">
    <location>
        <begin position="1"/>
        <end position="355"/>
    </location>
</feature>
<feature type="topological domain" description="Extracellular" evidence="1">
    <location>
        <begin position="1"/>
        <end position="49"/>
    </location>
</feature>
<feature type="transmembrane region" description="Helical; Name=1" evidence="1">
    <location>
        <begin position="50"/>
        <end position="74"/>
    </location>
</feature>
<feature type="topological domain" description="Cytoplasmic" evidence="1">
    <location>
        <begin position="75"/>
        <end position="86"/>
    </location>
</feature>
<feature type="transmembrane region" description="Helical; Name=2" evidence="1">
    <location>
        <begin position="87"/>
        <end position="112"/>
    </location>
</feature>
<feature type="topological domain" description="Extracellular" evidence="1">
    <location>
        <begin position="113"/>
        <end position="126"/>
    </location>
</feature>
<feature type="transmembrane region" description="Helical; Name=3" evidence="1">
    <location>
        <begin position="127"/>
        <end position="146"/>
    </location>
</feature>
<feature type="topological domain" description="Cytoplasmic" evidence="1">
    <location>
        <begin position="147"/>
        <end position="165"/>
    </location>
</feature>
<feature type="transmembrane region" description="Helical; Name=4" evidence="1">
    <location>
        <begin position="166"/>
        <end position="189"/>
    </location>
</feature>
<feature type="topological domain" description="Extracellular" evidence="1">
    <location>
        <begin position="190"/>
        <end position="215"/>
    </location>
</feature>
<feature type="transmembrane region" description="Helical; Name=5" evidence="1">
    <location>
        <begin position="216"/>
        <end position="243"/>
    </location>
</feature>
<feature type="topological domain" description="Cytoplasmic" evidence="1">
    <location>
        <begin position="244"/>
        <end position="265"/>
    </location>
</feature>
<feature type="transmembrane region" description="Helical; Name=6" evidence="1">
    <location>
        <begin position="266"/>
        <end position="289"/>
    </location>
</feature>
<feature type="topological domain" description="Extracellular" evidence="1">
    <location>
        <begin position="290"/>
        <end position="297"/>
    </location>
</feature>
<feature type="transmembrane region" description="Helical; Name=7" evidence="1">
    <location>
        <begin position="298"/>
        <end position="322"/>
    </location>
</feature>
<feature type="topological domain" description="Cytoplasmic" evidence="1">
    <location>
        <begin position="323"/>
        <end position="355"/>
    </location>
</feature>
<feature type="modified residue" description="N6-(retinylidene)lysine">
    <location>
        <position position="309"/>
    </location>
</feature>
<feature type="glycosylation site" description="N-linked (GlcNAc...) asparagine" evidence="1">
    <location>
        <position position="31"/>
    </location>
</feature>
<feature type="disulfide bond" evidence="2">
    <location>
        <begin position="123"/>
        <end position="200"/>
    </location>
</feature>
<gene>
    <name type="primary">G103</name>
    <name type="synonym">GF</name>
</gene>
<reference key="1">
    <citation type="journal article" date="1990" name="Vision Res.">
        <title>Isolation, DNA sequence and evolution of a color visual pigment gene of the blind cave fish Astyanax fasciatus.</title>
        <authorList>
            <person name="Yokoyama R."/>
            <person name="Yokoyama S."/>
        </authorList>
    </citation>
    <scope>NUCLEOTIDE SEQUENCE [GENOMIC DNA]</scope>
    <source>
        <tissue>Pineal gland</tissue>
    </source>
</reference>
<organism>
    <name type="scientific">Psalidodon fasciatus</name>
    <name type="common">Banded astyanax</name>
    <name type="synonym">Astyanax fasciatus</name>
    <dbReference type="NCBI Taxonomy" id="223369"/>
    <lineage>
        <taxon>Eukaryota</taxon>
        <taxon>Metazoa</taxon>
        <taxon>Chordata</taxon>
        <taxon>Craniata</taxon>
        <taxon>Vertebrata</taxon>
        <taxon>Euteleostomi</taxon>
        <taxon>Actinopterygii</taxon>
        <taxon>Neopterygii</taxon>
        <taxon>Teleostei</taxon>
        <taxon>Ostariophysi</taxon>
        <taxon>Characiformes</taxon>
        <taxon>Characoidei</taxon>
        <taxon>Acestrorhamphidae</taxon>
        <taxon>Acestrorhamphidae polyphyletic genera</taxon>
        <taxon>Psalidodon</taxon>
    </lineage>
</organism>
<protein>
    <recommendedName>
        <fullName>Green-sensitive opsin-1</fullName>
    </recommendedName>
    <alternativeName>
        <fullName>Green cone photoreceptor pigment 1</fullName>
    </alternativeName>
</protein>
<accession>P22330</accession>
<dbReference type="EMBL" id="M60945">
    <property type="protein sequence ID" value="AAA48545.1"/>
    <property type="molecule type" value="Genomic_DNA"/>
</dbReference>
<dbReference type="EMBL" id="M60938">
    <property type="protein sequence ID" value="AAA48545.1"/>
    <property type="status" value="JOINED"/>
    <property type="molecule type" value="Genomic_DNA"/>
</dbReference>
<dbReference type="EMBL" id="M60939">
    <property type="protein sequence ID" value="AAA48545.1"/>
    <property type="status" value="JOINED"/>
    <property type="molecule type" value="Genomic_DNA"/>
</dbReference>
<dbReference type="EMBL" id="M60940">
    <property type="protein sequence ID" value="AAA48545.1"/>
    <property type="status" value="JOINED"/>
    <property type="molecule type" value="Genomic_DNA"/>
</dbReference>
<dbReference type="EMBL" id="M60943">
    <property type="protein sequence ID" value="AAA48545.1"/>
    <property type="status" value="JOINED"/>
    <property type="molecule type" value="Genomic_DNA"/>
</dbReference>
<dbReference type="EMBL" id="M60944">
    <property type="protein sequence ID" value="AAA48545.1"/>
    <property type="status" value="JOINED"/>
    <property type="molecule type" value="Genomic_DNA"/>
</dbReference>
<dbReference type="EMBL" id="U12025">
    <property type="protein sequence ID" value="AAA67216.1"/>
    <property type="molecule type" value="Genomic_DNA"/>
</dbReference>
<dbReference type="PIR" id="I50091">
    <property type="entry name" value="I50091"/>
</dbReference>
<dbReference type="SMR" id="P22330"/>
<dbReference type="GlyCosmos" id="P22330">
    <property type="glycosylation" value="1 site, No reported glycans"/>
</dbReference>
<dbReference type="KEGG" id="amex:103026495"/>
<dbReference type="GO" id="GO:0016020">
    <property type="term" value="C:membrane"/>
    <property type="evidence" value="ECO:0007669"/>
    <property type="project" value="UniProtKB-SubCell"/>
</dbReference>
<dbReference type="GO" id="GO:0004930">
    <property type="term" value="F:G protein-coupled receptor activity"/>
    <property type="evidence" value="ECO:0007669"/>
    <property type="project" value="UniProtKB-KW"/>
</dbReference>
<dbReference type="GO" id="GO:0009881">
    <property type="term" value="F:photoreceptor activity"/>
    <property type="evidence" value="ECO:0007669"/>
    <property type="project" value="UniProtKB-KW"/>
</dbReference>
<dbReference type="GO" id="GO:0007602">
    <property type="term" value="P:phototransduction"/>
    <property type="evidence" value="ECO:0007669"/>
    <property type="project" value="UniProtKB-KW"/>
</dbReference>
<dbReference type="GO" id="GO:0007601">
    <property type="term" value="P:visual perception"/>
    <property type="evidence" value="ECO:0007669"/>
    <property type="project" value="UniProtKB-KW"/>
</dbReference>
<dbReference type="FunFam" id="1.20.1070.10:FF:000090">
    <property type="entry name" value="Long-wave-sensitive opsin 1"/>
    <property type="match status" value="1"/>
</dbReference>
<dbReference type="Gene3D" id="1.20.1070.10">
    <property type="entry name" value="Rhodopsin 7-helix transmembrane proteins"/>
    <property type="match status" value="1"/>
</dbReference>
<dbReference type="InterPro" id="IPR050125">
    <property type="entry name" value="GPCR_opsins"/>
</dbReference>
<dbReference type="InterPro" id="IPR000276">
    <property type="entry name" value="GPCR_Rhodpsn"/>
</dbReference>
<dbReference type="InterPro" id="IPR017452">
    <property type="entry name" value="GPCR_Rhodpsn_7TM"/>
</dbReference>
<dbReference type="InterPro" id="IPR001760">
    <property type="entry name" value="Opsin"/>
</dbReference>
<dbReference type="InterPro" id="IPR000378">
    <property type="entry name" value="Opsin_red/grn"/>
</dbReference>
<dbReference type="InterPro" id="IPR027430">
    <property type="entry name" value="Retinal_BS"/>
</dbReference>
<dbReference type="PANTHER" id="PTHR24240">
    <property type="entry name" value="OPSIN"/>
    <property type="match status" value="1"/>
</dbReference>
<dbReference type="Pfam" id="PF00001">
    <property type="entry name" value="7tm_1"/>
    <property type="match status" value="1"/>
</dbReference>
<dbReference type="PRINTS" id="PR00237">
    <property type="entry name" value="GPCRRHODOPSN"/>
</dbReference>
<dbReference type="PRINTS" id="PR00238">
    <property type="entry name" value="OPSIN"/>
</dbReference>
<dbReference type="PRINTS" id="PR00575">
    <property type="entry name" value="OPSINREDGRN"/>
</dbReference>
<dbReference type="SMART" id="SM01381">
    <property type="entry name" value="7TM_GPCR_Srsx"/>
    <property type="match status" value="1"/>
</dbReference>
<dbReference type="SUPFAM" id="SSF81321">
    <property type="entry name" value="Family A G protein-coupled receptor-like"/>
    <property type="match status" value="1"/>
</dbReference>
<dbReference type="PROSITE" id="PS00237">
    <property type="entry name" value="G_PROTEIN_RECEP_F1_1"/>
    <property type="match status" value="1"/>
</dbReference>
<dbReference type="PROSITE" id="PS50262">
    <property type="entry name" value="G_PROTEIN_RECEP_F1_2"/>
    <property type="match status" value="1"/>
</dbReference>
<dbReference type="PROSITE" id="PS00238">
    <property type="entry name" value="OPSIN"/>
    <property type="match status" value="1"/>
</dbReference>
<name>OPSG1_PSAFA</name>
<evidence type="ECO:0000255" key="1"/>
<evidence type="ECO:0000255" key="2">
    <source>
        <dbReference type="PROSITE-ProRule" id="PRU00521"/>
    </source>
</evidence>
<comment type="function">
    <text>Visual pigments are the light-absorbing molecules that mediate vision. They consist of an apoprotein, opsin, covalently linked to cis-retinal.</text>
</comment>
<comment type="subcellular location">
    <subcellularLocation>
        <location>Membrane</location>
        <topology>Multi-pass membrane protein</topology>
    </subcellularLocation>
</comment>
<comment type="tissue specificity">
    <text>The color pigments are found in the cone photoreceptor cells.</text>
</comment>
<comment type="miscellaneous">
    <text>This fish possesses three genes for green opsin. Two (G103 and G101) that belong to the LWS/MWS group and one (RH11) that belongs to the RH2 group.</text>
</comment>
<comment type="similarity">
    <text evidence="2">Belongs to the G-protein coupled receptor 1 family. Opsin subfamily.</text>
</comment>